<dbReference type="EC" id="1.7.1.13" evidence="1"/>
<dbReference type="EMBL" id="CP000377">
    <property type="protein sequence ID" value="ABF64776.1"/>
    <property type="molecule type" value="Genomic_DNA"/>
</dbReference>
<dbReference type="RefSeq" id="WP_011539368.1">
    <property type="nucleotide sequence ID" value="NC_008044.1"/>
</dbReference>
<dbReference type="SMR" id="Q1GEZ0"/>
<dbReference type="STRING" id="292414.TM1040_2044"/>
<dbReference type="KEGG" id="sit:TM1040_2044"/>
<dbReference type="eggNOG" id="COG0780">
    <property type="taxonomic scope" value="Bacteria"/>
</dbReference>
<dbReference type="HOGENOM" id="CLU_102489_0_1_5"/>
<dbReference type="OrthoDB" id="9789995at2"/>
<dbReference type="UniPathway" id="UPA00392"/>
<dbReference type="Proteomes" id="UP000000636">
    <property type="component" value="Chromosome"/>
</dbReference>
<dbReference type="GO" id="GO:0005737">
    <property type="term" value="C:cytoplasm"/>
    <property type="evidence" value="ECO:0007669"/>
    <property type="project" value="UniProtKB-SubCell"/>
</dbReference>
<dbReference type="GO" id="GO:0033739">
    <property type="term" value="F:preQ1 synthase activity"/>
    <property type="evidence" value="ECO:0007669"/>
    <property type="project" value="UniProtKB-UniRule"/>
</dbReference>
<dbReference type="GO" id="GO:0008616">
    <property type="term" value="P:queuosine biosynthetic process"/>
    <property type="evidence" value="ECO:0007669"/>
    <property type="project" value="UniProtKB-UniRule"/>
</dbReference>
<dbReference type="GO" id="GO:0006400">
    <property type="term" value="P:tRNA modification"/>
    <property type="evidence" value="ECO:0007669"/>
    <property type="project" value="UniProtKB-UniRule"/>
</dbReference>
<dbReference type="Gene3D" id="3.30.1130.10">
    <property type="match status" value="1"/>
</dbReference>
<dbReference type="HAMAP" id="MF_00818">
    <property type="entry name" value="QueF_type1"/>
    <property type="match status" value="1"/>
</dbReference>
<dbReference type="InterPro" id="IPR043133">
    <property type="entry name" value="GTP-CH-I_C/QueF"/>
</dbReference>
<dbReference type="InterPro" id="IPR050084">
    <property type="entry name" value="NADPH_dep_7-cyano-7-deazaG_red"/>
</dbReference>
<dbReference type="InterPro" id="IPR029500">
    <property type="entry name" value="QueF"/>
</dbReference>
<dbReference type="InterPro" id="IPR016856">
    <property type="entry name" value="QueF_type1"/>
</dbReference>
<dbReference type="NCBIfam" id="TIGR03139">
    <property type="entry name" value="QueF-II"/>
    <property type="match status" value="1"/>
</dbReference>
<dbReference type="PANTHER" id="PTHR34354">
    <property type="entry name" value="NADPH-DEPENDENT 7-CYANO-7-DEAZAGUANINE REDUCTASE"/>
    <property type="match status" value="1"/>
</dbReference>
<dbReference type="PANTHER" id="PTHR34354:SF1">
    <property type="entry name" value="NADPH-DEPENDENT 7-CYANO-7-DEAZAGUANINE REDUCTASE"/>
    <property type="match status" value="1"/>
</dbReference>
<dbReference type="Pfam" id="PF14489">
    <property type="entry name" value="QueF"/>
    <property type="match status" value="1"/>
</dbReference>
<dbReference type="PIRSF" id="PIRSF027377">
    <property type="entry name" value="Nitrile_oxidored_QueF"/>
    <property type="match status" value="1"/>
</dbReference>
<dbReference type="SUPFAM" id="SSF55620">
    <property type="entry name" value="Tetrahydrobiopterin biosynthesis enzymes-like"/>
    <property type="match status" value="1"/>
</dbReference>
<protein>
    <recommendedName>
        <fullName evidence="1">NADPH-dependent 7-cyano-7-deazaguanine reductase</fullName>
        <ecNumber evidence="1">1.7.1.13</ecNumber>
    </recommendedName>
    <alternativeName>
        <fullName evidence="1">7-cyano-7-carbaguanine reductase</fullName>
    </alternativeName>
    <alternativeName>
        <fullName evidence="1">NADPH-dependent nitrile oxidoreductase</fullName>
    </alternativeName>
    <alternativeName>
        <fullName evidence="1">PreQ(0) reductase</fullName>
    </alternativeName>
</protein>
<gene>
    <name evidence="1" type="primary">queF</name>
    <name type="ordered locus">TM1040_2044</name>
</gene>
<comment type="function">
    <text evidence="1">Catalyzes the NADPH-dependent reduction of 7-cyano-7-deazaguanine (preQ0) to 7-aminomethyl-7-deazaguanine (preQ1).</text>
</comment>
<comment type="catalytic activity">
    <reaction evidence="1">
        <text>7-aminomethyl-7-carbaguanine + 2 NADP(+) = 7-cyano-7-deazaguanine + 2 NADPH + 3 H(+)</text>
        <dbReference type="Rhea" id="RHEA:13409"/>
        <dbReference type="ChEBI" id="CHEBI:15378"/>
        <dbReference type="ChEBI" id="CHEBI:45075"/>
        <dbReference type="ChEBI" id="CHEBI:57783"/>
        <dbReference type="ChEBI" id="CHEBI:58349"/>
        <dbReference type="ChEBI" id="CHEBI:58703"/>
        <dbReference type="EC" id="1.7.1.13"/>
    </reaction>
</comment>
<comment type="pathway">
    <text evidence="1">tRNA modification; tRNA-queuosine biosynthesis.</text>
</comment>
<comment type="subcellular location">
    <subcellularLocation>
        <location evidence="1">Cytoplasm</location>
    </subcellularLocation>
</comment>
<comment type="similarity">
    <text evidence="1">Belongs to the GTP cyclohydrolase I family. QueF type 1 subfamily.</text>
</comment>
<evidence type="ECO:0000255" key="1">
    <source>
        <dbReference type="HAMAP-Rule" id="MF_00818"/>
    </source>
</evidence>
<keyword id="KW-0963">Cytoplasm</keyword>
<keyword id="KW-0521">NADP</keyword>
<keyword id="KW-0560">Oxidoreductase</keyword>
<keyword id="KW-0671">Queuosine biosynthesis</keyword>
<keyword id="KW-1185">Reference proteome</keyword>
<reference key="1">
    <citation type="submission" date="2006-05" db="EMBL/GenBank/DDBJ databases">
        <title>Complete sequence of chromosome of Silicibacter sp. TM1040.</title>
        <authorList>
            <consortium name="US DOE Joint Genome Institute"/>
            <person name="Copeland A."/>
            <person name="Lucas S."/>
            <person name="Lapidus A."/>
            <person name="Barry K."/>
            <person name="Detter J.C."/>
            <person name="Glavina del Rio T."/>
            <person name="Hammon N."/>
            <person name="Israni S."/>
            <person name="Dalin E."/>
            <person name="Tice H."/>
            <person name="Pitluck S."/>
            <person name="Brettin T."/>
            <person name="Bruce D."/>
            <person name="Han C."/>
            <person name="Tapia R."/>
            <person name="Goodwin L."/>
            <person name="Thompson L.S."/>
            <person name="Gilna P."/>
            <person name="Schmutz J."/>
            <person name="Larimer F."/>
            <person name="Land M."/>
            <person name="Hauser L."/>
            <person name="Kyrpides N."/>
            <person name="Kim E."/>
            <person name="Belas R."/>
            <person name="Moran M.A."/>
            <person name="Buchan A."/>
            <person name="Gonzalez J.M."/>
            <person name="Schell M.A."/>
            <person name="Sun F."/>
            <person name="Richardson P."/>
        </authorList>
    </citation>
    <scope>NUCLEOTIDE SEQUENCE [LARGE SCALE GENOMIC DNA]</scope>
    <source>
        <strain>TM1040</strain>
    </source>
</reference>
<organism>
    <name type="scientific">Ruegeria sp. (strain TM1040)</name>
    <name type="common">Silicibacter sp.</name>
    <dbReference type="NCBI Taxonomy" id="292414"/>
    <lineage>
        <taxon>Bacteria</taxon>
        <taxon>Pseudomonadati</taxon>
        <taxon>Pseudomonadota</taxon>
        <taxon>Alphaproteobacteria</taxon>
        <taxon>Rhodobacterales</taxon>
        <taxon>Roseobacteraceae</taxon>
        <taxon>Ruegeria</taxon>
    </lineage>
</organism>
<accession>Q1GEZ0</accession>
<feature type="chain" id="PRO_1000062409" description="NADPH-dependent 7-cyano-7-deazaguanine reductase">
    <location>
        <begin position="1"/>
        <end position="154"/>
    </location>
</feature>
<feature type="active site" description="Thioimide intermediate" evidence="1">
    <location>
        <position position="52"/>
    </location>
</feature>
<feature type="active site" description="Proton donor" evidence="1">
    <location>
        <position position="59"/>
    </location>
</feature>
<feature type="binding site" evidence="1">
    <location>
        <begin position="74"/>
        <end position="76"/>
    </location>
    <ligand>
        <name>substrate</name>
    </ligand>
</feature>
<feature type="binding site" evidence="1">
    <location>
        <begin position="93"/>
        <end position="94"/>
    </location>
    <ligand>
        <name>substrate</name>
    </ligand>
</feature>
<name>QUEF_RUEST</name>
<sequence>MSEDIYQNLKQLGGETRIPASPEEAELERVANPQADVAYNVRFTAPEFTSLCPMTGQPDFAHLVIDYVPGPWLVESKSLKLFLTSFRNHGAFHEDCTISIARRLVDFLDPQWLRIGGYWYPRGGIPIDVFWQSGTIPEGVWIPDQGVPPYRGRG</sequence>
<proteinExistence type="inferred from homology"/>